<accession>A4SPD7</accession>
<protein>
    <recommendedName>
        <fullName evidence="1">Peptidase T</fullName>
        <ecNumber evidence="1">3.4.11.4</ecNumber>
    </recommendedName>
    <alternativeName>
        <fullName evidence="1">Aminotripeptidase</fullName>
        <shortName evidence="1">Tripeptidase</shortName>
    </alternativeName>
    <alternativeName>
        <fullName evidence="1">Tripeptide aminopeptidase</fullName>
    </alternativeName>
</protein>
<gene>
    <name evidence="1" type="primary">pepT</name>
    <name type="ordered locus">ASA_2741</name>
</gene>
<dbReference type="EC" id="3.4.11.4" evidence="1"/>
<dbReference type="EMBL" id="CP000644">
    <property type="protein sequence ID" value="ABO90759.1"/>
    <property type="molecule type" value="Genomic_DNA"/>
</dbReference>
<dbReference type="RefSeq" id="WP_005309959.1">
    <property type="nucleotide sequence ID" value="NC_009348.1"/>
</dbReference>
<dbReference type="SMR" id="A4SPD7"/>
<dbReference type="STRING" id="29491.GCA_000820065_00071"/>
<dbReference type="MEROPS" id="M20.003"/>
<dbReference type="KEGG" id="asa:ASA_2741"/>
<dbReference type="eggNOG" id="COG2195">
    <property type="taxonomic scope" value="Bacteria"/>
</dbReference>
<dbReference type="HOGENOM" id="CLU_053676_0_0_6"/>
<dbReference type="Proteomes" id="UP000000225">
    <property type="component" value="Chromosome"/>
</dbReference>
<dbReference type="GO" id="GO:0005829">
    <property type="term" value="C:cytosol"/>
    <property type="evidence" value="ECO:0007669"/>
    <property type="project" value="TreeGrafter"/>
</dbReference>
<dbReference type="GO" id="GO:0008237">
    <property type="term" value="F:metallopeptidase activity"/>
    <property type="evidence" value="ECO:0007669"/>
    <property type="project" value="UniProtKB-KW"/>
</dbReference>
<dbReference type="GO" id="GO:0045148">
    <property type="term" value="F:tripeptide aminopeptidase activity"/>
    <property type="evidence" value="ECO:0007669"/>
    <property type="project" value="UniProtKB-UniRule"/>
</dbReference>
<dbReference type="GO" id="GO:0008270">
    <property type="term" value="F:zinc ion binding"/>
    <property type="evidence" value="ECO:0007669"/>
    <property type="project" value="UniProtKB-UniRule"/>
</dbReference>
<dbReference type="GO" id="GO:0043171">
    <property type="term" value="P:peptide catabolic process"/>
    <property type="evidence" value="ECO:0007669"/>
    <property type="project" value="UniProtKB-UniRule"/>
</dbReference>
<dbReference type="GO" id="GO:0006508">
    <property type="term" value="P:proteolysis"/>
    <property type="evidence" value="ECO:0007669"/>
    <property type="project" value="UniProtKB-UniRule"/>
</dbReference>
<dbReference type="CDD" id="cd03892">
    <property type="entry name" value="M20_peptT"/>
    <property type="match status" value="1"/>
</dbReference>
<dbReference type="FunFam" id="3.30.70.360:FF:000002">
    <property type="entry name" value="Peptidase T"/>
    <property type="match status" value="1"/>
</dbReference>
<dbReference type="Gene3D" id="3.30.70.360">
    <property type="match status" value="1"/>
</dbReference>
<dbReference type="Gene3D" id="3.40.630.10">
    <property type="entry name" value="Zn peptidases"/>
    <property type="match status" value="1"/>
</dbReference>
<dbReference type="HAMAP" id="MF_00550">
    <property type="entry name" value="Aminopeptidase_M20"/>
    <property type="match status" value="1"/>
</dbReference>
<dbReference type="InterPro" id="IPR001261">
    <property type="entry name" value="ArgE/DapE_CS"/>
</dbReference>
<dbReference type="InterPro" id="IPR036264">
    <property type="entry name" value="Bact_exopeptidase_dim_dom"/>
</dbReference>
<dbReference type="InterPro" id="IPR002933">
    <property type="entry name" value="Peptidase_M20"/>
</dbReference>
<dbReference type="InterPro" id="IPR011650">
    <property type="entry name" value="Peptidase_M20_dimer"/>
</dbReference>
<dbReference type="InterPro" id="IPR010161">
    <property type="entry name" value="Peptidase_M20B"/>
</dbReference>
<dbReference type="NCBIfam" id="TIGR01882">
    <property type="entry name" value="peptidase-T"/>
    <property type="match status" value="1"/>
</dbReference>
<dbReference type="NCBIfam" id="NF003976">
    <property type="entry name" value="PRK05469.1"/>
    <property type="match status" value="1"/>
</dbReference>
<dbReference type="NCBIfam" id="NF009920">
    <property type="entry name" value="PRK13381.1"/>
    <property type="match status" value="1"/>
</dbReference>
<dbReference type="PANTHER" id="PTHR42994">
    <property type="entry name" value="PEPTIDASE T"/>
    <property type="match status" value="1"/>
</dbReference>
<dbReference type="PANTHER" id="PTHR42994:SF1">
    <property type="entry name" value="PEPTIDASE T"/>
    <property type="match status" value="1"/>
</dbReference>
<dbReference type="Pfam" id="PF07687">
    <property type="entry name" value="M20_dimer"/>
    <property type="match status" value="1"/>
</dbReference>
<dbReference type="Pfam" id="PF01546">
    <property type="entry name" value="Peptidase_M20"/>
    <property type="match status" value="1"/>
</dbReference>
<dbReference type="PIRSF" id="PIRSF037215">
    <property type="entry name" value="Peptidase_M20B"/>
    <property type="match status" value="1"/>
</dbReference>
<dbReference type="SUPFAM" id="SSF55031">
    <property type="entry name" value="Bacterial exopeptidase dimerisation domain"/>
    <property type="match status" value="1"/>
</dbReference>
<dbReference type="SUPFAM" id="SSF53187">
    <property type="entry name" value="Zn-dependent exopeptidases"/>
    <property type="match status" value="1"/>
</dbReference>
<dbReference type="PROSITE" id="PS00758">
    <property type="entry name" value="ARGE_DAPE_CPG2_1"/>
    <property type="match status" value="1"/>
</dbReference>
<dbReference type="PROSITE" id="PS00759">
    <property type="entry name" value="ARGE_DAPE_CPG2_2"/>
    <property type="match status" value="1"/>
</dbReference>
<keyword id="KW-0031">Aminopeptidase</keyword>
<keyword id="KW-0963">Cytoplasm</keyword>
<keyword id="KW-0378">Hydrolase</keyword>
<keyword id="KW-0479">Metal-binding</keyword>
<keyword id="KW-0482">Metalloprotease</keyword>
<keyword id="KW-0645">Protease</keyword>
<keyword id="KW-0862">Zinc</keyword>
<name>PEPT_AERS4</name>
<organism>
    <name type="scientific">Aeromonas salmonicida (strain A449)</name>
    <dbReference type="NCBI Taxonomy" id="382245"/>
    <lineage>
        <taxon>Bacteria</taxon>
        <taxon>Pseudomonadati</taxon>
        <taxon>Pseudomonadota</taxon>
        <taxon>Gammaproteobacteria</taxon>
        <taxon>Aeromonadales</taxon>
        <taxon>Aeromonadaceae</taxon>
        <taxon>Aeromonas</taxon>
    </lineage>
</organism>
<proteinExistence type="inferred from homology"/>
<feature type="chain" id="PRO_1000129018" description="Peptidase T">
    <location>
        <begin position="1"/>
        <end position="407"/>
    </location>
</feature>
<feature type="active site" evidence="1">
    <location>
        <position position="79"/>
    </location>
</feature>
<feature type="active site" description="Proton acceptor" evidence="1">
    <location>
        <position position="172"/>
    </location>
</feature>
<feature type="binding site" evidence="1">
    <location>
        <position position="77"/>
    </location>
    <ligand>
        <name>Zn(2+)</name>
        <dbReference type="ChEBI" id="CHEBI:29105"/>
        <label>1</label>
    </ligand>
</feature>
<feature type="binding site" evidence="1">
    <location>
        <position position="138"/>
    </location>
    <ligand>
        <name>Zn(2+)</name>
        <dbReference type="ChEBI" id="CHEBI:29105"/>
        <label>1</label>
    </ligand>
</feature>
<feature type="binding site" evidence="1">
    <location>
        <position position="138"/>
    </location>
    <ligand>
        <name>Zn(2+)</name>
        <dbReference type="ChEBI" id="CHEBI:29105"/>
        <label>2</label>
    </ligand>
</feature>
<feature type="binding site" evidence="1">
    <location>
        <position position="173"/>
    </location>
    <ligand>
        <name>Zn(2+)</name>
        <dbReference type="ChEBI" id="CHEBI:29105"/>
        <label>2</label>
    </ligand>
</feature>
<feature type="binding site" evidence="1">
    <location>
        <position position="195"/>
    </location>
    <ligand>
        <name>Zn(2+)</name>
        <dbReference type="ChEBI" id="CHEBI:29105"/>
        <label>1</label>
    </ligand>
</feature>
<feature type="binding site" evidence="1">
    <location>
        <position position="377"/>
    </location>
    <ligand>
        <name>Zn(2+)</name>
        <dbReference type="ChEBI" id="CHEBI:29105"/>
        <label>2</label>
    </ligand>
</feature>
<evidence type="ECO:0000255" key="1">
    <source>
        <dbReference type="HAMAP-Rule" id="MF_00550"/>
    </source>
</evidence>
<sequence length="407" mass="44558">MDTLLERFLRYVTFHTRSDATNPACPSSEGQLIFARALRDEMEQMGLTLVTLDEHGYLTACLPGNQPDAPAIGLIAHMDTADYAAEQVVPQIIESYQGGDICLGKGDEVLAIRQYRCLKNYLGQDLITTDGSTLLGADDKAGIAEILTAIDYLLAHPDIPRGDLWVGLTPDEEIGRGADLFPLDRFPAKWAYTVDGGELGELEYENFNAASATVRITGNNVHPGTAKGSMINSQTLAARFHAAMPPEQTPECTDGYEGFFHLAQMSGTVEESTLHYIIRDFDDDAFAARKAQLKERVASLQLDAPKARIELTLTDSYRNMRSQIEPHMHIVELARAAMLAADVVPKIKPIRGGTDGARLSFMGLPCPNLFTGGHNFHGKHEFIPLQSMEKAVATLVALVRLTSAWRG</sequence>
<reference key="1">
    <citation type="journal article" date="2008" name="BMC Genomics">
        <title>The genome of Aeromonas salmonicida subsp. salmonicida A449: insights into the evolution of a fish pathogen.</title>
        <authorList>
            <person name="Reith M.E."/>
            <person name="Singh R.K."/>
            <person name="Curtis B."/>
            <person name="Boyd J.M."/>
            <person name="Bouevitch A."/>
            <person name="Kimball J."/>
            <person name="Munholland J."/>
            <person name="Murphy C."/>
            <person name="Sarty D."/>
            <person name="Williams J."/>
            <person name="Nash J.H."/>
            <person name="Johnson S.C."/>
            <person name="Brown L.L."/>
        </authorList>
    </citation>
    <scope>NUCLEOTIDE SEQUENCE [LARGE SCALE GENOMIC DNA]</scope>
    <source>
        <strain>A449</strain>
    </source>
</reference>
<comment type="function">
    <text evidence="1">Cleaves the N-terminal amino acid of tripeptides.</text>
</comment>
<comment type="catalytic activity">
    <reaction evidence="1">
        <text>Release of the N-terminal residue from a tripeptide.</text>
        <dbReference type="EC" id="3.4.11.4"/>
    </reaction>
</comment>
<comment type="cofactor">
    <cofactor evidence="1">
        <name>Zn(2+)</name>
        <dbReference type="ChEBI" id="CHEBI:29105"/>
    </cofactor>
    <text evidence="1">Binds 2 Zn(2+) ions per subunit.</text>
</comment>
<comment type="subcellular location">
    <subcellularLocation>
        <location evidence="1">Cytoplasm</location>
    </subcellularLocation>
</comment>
<comment type="similarity">
    <text evidence="1">Belongs to the peptidase M20B family.</text>
</comment>